<protein>
    <recommendedName>
        <fullName evidence="1">Urease subunit beta</fullName>
        <ecNumber evidence="1">3.5.1.5</ecNumber>
    </recommendedName>
    <alternativeName>
        <fullName evidence="1">Urea amidohydrolase subunit beta</fullName>
    </alternativeName>
</protein>
<feature type="chain" id="PRO_0000239893" description="Urease subunit beta">
    <location>
        <begin position="1"/>
        <end position="101"/>
    </location>
</feature>
<accession>Q2SDQ2</accession>
<comment type="catalytic activity">
    <reaction evidence="1">
        <text>urea + 2 H2O + H(+) = hydrogencarbonate + 2 NH4(+)</text>
        <dbReference type="Rhea" id="RHEA:20557"/>
        <dbReference type="ChEBI" id="CHEBI:15377"/>
        <dbReference type="ChEBI" id="CHEBI:15378"/>
        <dbReference type="ChEBI" id="CHEBI:16199"/>
        <dbReference type="ChEBI" id="CHEBI:17544"/>
        <dbReference type="ChEBI" id="CHEBI:28938"/>
        <dbReference type="EC" id="3.5.1.5"/>
    </reaction>
</comment>
<comment type="pathway">
    <text evidence="1">Nitrogen metabolism; urea degradation; CO(2) and NH(3) from urea (urease route): step 1/1.</text>
</comment>
<comment type="subunit">
    <text evidence="1">Heterotrimer of UreA (gamma), UreB (beta) and UreC (alpha) subunits. Three heterotrimers associate to form the active enzyme.</text>
</comment>
<comment type="subcellular location">
    <subcellularLocation>
        <location evidence="1">Cytoplasm</location>
    </subcellularLocation>
</comment>
<comment type="similarity">
    <text evidence="1">Belongs to the urease beta subunit family.</text>
</comment>
<organism>
    <name type="scientific">Hahella chejuensis (strain KCTC 2396)</name>
    <dbReference type="NCBI Taxonomy" id="349521"/>
    <lineage>
        <taxon>Bacteria</taxon>
        <taxon>Pseudomonadati</taxon>
        <taxon>Pseudomonadota</taxon>
        <taxon>Gammaproteobacteria</taxon>
        <taxon>Oceanospirillales</taxon>
        <taxon>Hahellaceae</taxon>
        <taxon>Hahella</taxon>
    </lineage>
</organism>
<keyword id="KW-0963">Cytoplasm</keyword>
<keyword id="KW-0378">Hydrolase</keyword>
<keyword id="KW-1185">Reference proteome</keyword>
<evidence type="ECO:0000255" key="1">
    <source>
        <dbReference type="HAMAP-Rule" id="MF_01954"/>
    </source>
</evidence>
<sequence>MIPGEIDALPGDIDINAGLPTVTVEVTNTGDRPVQVGSHYHFFETNPALSFTRAQTRGFRLNIAAGTAVRFEPGQTRTVELVALGGERKVYGFRGDVMGDL</sequence>
<gene>
    <name evidence="1" type="primary">ureB</name>
    <name type="ordered locus">HCH_04522</name>
</gene>
<reference key="1">
    <citation type="journal article" date="2005" name="Nucleic Acids Res.">
        <title>Genomic blueprint of Hahella chejuensis, a marine microbe producing an algicidal agent.</title>
        <authorList>
            <person name="Jeong H."/>
            <person name="Yim J.H."/>
            <person name="Lee C."/>
            <person name="Choi S.-H."/>
            <person name="Park Y.K."/>
            <person name="Yoon S.H."/>
            <person name="Hur C.-G."/>
            <person name="Kang H.-Y."/>
            <person name="Kim D."/>
            <person name="Lee H.H."/>
            <person name="Park K.H."/>
            <person name="Park S.-H."/>
            <person name="Park H.-S."/>
            <person name="Lee H.K."/>
            <person name="Oh T.K."/>
            <person name="Kim J.F."/>
        </authorList>
    </citation>
    <scope>NUCLEOTIDE SEQUENCE [LARGE SCALE GENOMIC DNA]</scope>
    <source>
        <strain>KCTC 2396</strain>
    </source>
</reference>
<proteinExistence type="inferred from homology"/>
<dbReference type="EC" id="3.5.1.5" evidence="1"/>
<dbReference type="EMBL" id="CP000155">
    <property type="protein sequence ID" value="ABC31222.1"/>
    <property type="molecule type" value="Genomic_DNA"/>
</dbReference>
<dbReference type="RefSeq" id="WP_011398289.1">
    <property type="nucleotide sequence ID" value="NC_007645.1"/>
</dbReference>
<dbReference type="SMR" id="Q2SDQ2"/>
<dbReference type="STRING" id="349521.HCH_04522"/>
<dbReference type="KEGG" id="hch:HCH_04522"/>
<dbReference type="eggNOG" id="COG0832">
    <property type="taxonomic scope" value="Bacteria"/>
</dbReference>
<dbReference type="HOGENOM" id="CLU_129707_1_1_6"/>
<dbReference type="OrthoDB" id="9797217at2"/>
<dbReference type="UniPathway" id="UPA00258">
    <property type="reaction ID" value="UER00370"/>
</dbReference>
<dbReference type="Proteomes" id="UP000000238">
    <property type="component" value="Chromosome"/>
</dbReference>
<dbReference type="GO" id="GO:0035550">
    <property type="term" value="C:urease complex"/>
    <property type="evidence" value="ECO:0007669"/>
    <property type="project" value="InterPro"/>
</dbReference>
<dbReference type="GO" id="GO:0009039">
    <property type="term" value="F:urease activity"/>
    <property type="evidence" value="ECO:0007669"/>
    <property type="project" value="UniProtKB-UniRule"/>
</dbReference>
<dbReference type="GO" id="GO:0043419">
    <property type="term" value="P:urea catabolic process"/>
    <property type="evidence" value="ECO:0007669"/>
    <property type="project" value="UniProtKB-UniRule"/>
</dbReference>
<dbReference type="CDD" id="cd00407">
    <property type="entry name" value="Urease_beta"/>
    <property type="match status" value="1"/>
</dbReference>
<dbReference type="FunFam" id="2.10.150.10:FF:000001">
    <property type="entry name" value="Urease subunit beta"/>
    <property type="match status" value="1"/>
</dbReference>
<dbReference type="Gene3D" id="2.10.150.10">
    <property type="entry name" value="Urease, beta subunit"/>
    <property type="match status" value="1"/>
</dbReference>
<dbReference type="HAMAP" id="MF_01954">
    <property type="entry name" value="Urease_beta"/>
    <property type="match status" value="1"/>
</dbReference>
<dbReference type="InterPro" id="IPR002019">
    <property type="entry name" value="Urease_beta-like"/>
</dbReference>
<dbReference type="InterPro" id="IPR036461">
    <property type="entry name" value="Urease_betasu_sf"/>
</dbReference>
<dbReference type="InterPro" id="IPR050069">
    <property type="entry name" value="Urease_subunit"/>
</dbReference>
<dbReference type="NCBIfam" id="NF009682">
    <property type="entry name" value="PRK13203.1"/>
    <property type="match status" value="1"/>
</dbReference>
<dbReference type="NCBIfam" id="TIGR00192">
    <property type="entry name" value="urease_beta"/>
    <property type="match status" value="1"/>
</dbReference>
<dbReference type="PANTHER" id="PTHR33569">
    <property type="entry name" value="UREASE"/>
    <property type="match status" value="1"/>
</dbReference>
<dbReference type="PANTHER" id="PTHR33569:SF1">
    <property type="entry name" value="UREASE"/>
    <property type="match status" value="1"/>
</dbReference>
<dbReference type="Pfam" id="PF00699">
    <property type="entry name" value="Urease_beta"/>
    <property type="match status" value="1"/>
</dbReference>
<dbReference type="SUPFAM" id="SSF51278">
    <property type="entry name" value="Urease, beta-subunit"/>
    <property type="match status" value="1"/>
</dbReference>
<name>URE2_HAHCH</name>